<proteinExistence type="evidence at transcript level"/>
<dbReference type="EMBL" id="BC089301">
    <property type="protein sequence ID" value="AAH89301.1"/>
    <property type="molecule type" value="mRNA"/>
</dbReference>
<dbReference type="EMBL" id="BC110962">
    <property type="protein sequence ID" value="AAI10963.1"/>
    <property type="molecule type" value="mRNA"/>
</dbReference>
<dbReference type="RefSeq" id="NP_001089953.1">
    <property type="nucleotide sequence ID" value="NM_001096484.1"/>
</dbReference>
<dbReference type="SMR" id="Q5FWK6"/>
<dbReference type="BioGRID" id="592804">
    <property type="interactions" value="1"/>
</dbReference>
<dbReference type="DNASU" id="735023"/>
<dbReference type="GeneID" id="735023"/>
<dbReference type="KEGG" id="xla:735023"/>
<dbReference type="AGR" id="Xenbase:XB-GENE-956987"/>
<dbReference type="CTD" id="735023"/>
<dbReference type="Xenbase" id="XB-GENE-956987">
    <property type="gene designation" value="wls.L"/>
</dbReference>
<dbReference type="OrthoDB" id="5804250at2759"/>
<dbReference type="Proteomes" id="UP000186698">
    <property type="component" value="Chromosome 4L"/>
</dbReference>
<dbReference type="Bgee" id="735023">
    <property type="expression patterns" value="Expressed in internal ear and 19 other cell types or tissues"/>
</dbReference>
<dbReference type="GO" id="GO:0030659">
    <property type="term" value="C:cytoplasmic vesicle membrane"/>
    <property type="evidence" value="ECO:0007669"/>
    <property type="project" value="UniProtKB-SubCell"/>
</dbReference>
<dbReference type="GO" id="GO:0012505">
    <property type="term" value="C:endomembrane system"/>
    <property type="evidence" value="ECO:0000318"/>
    <property type="project" value="GO_Central"/>
</dbReference>
<dbReference type="GO" id="GO:0000139">
    <property type="term" value="C:Golgi membrane"/>
    <property type="evidence" value="ECO:0007669"/>
    <property type="project" value="UniProtKB-SubCell"/>
</dbReference>
<dbReference type="GO" id="GO:0031090">
    <property type="term" value="C:organelle membrane"/>
    <property type="evidence" value="ECO:0000318"/>
    <property type="project" value="GO_Central"/>
</dbReference>
<dbReference type="GO" id="GO:0017147">
    <property type="term" value="F:Wnt-protein binding"/>
    <property type="evidence" value="ECO:0000318"/>
    <property type="project" value="GO_Central"/>
</dbReference>
<dbReference type="GO" id="GO:0043010">
    <property type="term" value="P:camera-type eye development"/>
    <property type="evidence" value="ECO:0000315"/>
    <property type="project" value="UniProtKB"/>
</dbReference>
<dbReference type="GO" id="GO:0006886">
    <property type="term" value="P:intracellular protein transport"/>
    <property type="evidence" value="ECO:0000318"/>
    <property type="project" value="GO_Central"/>
</dbReference>
<dbReference type="GO" id="GO:0061357">
    <property type="term" value="P:positive regulation of Wnt protein secretion"/>
    <property type="evidence" value="ECO:0000315"/>
    <property type="project" value="UniProtKB"/>
</dbReference>
<dbReference type="GO" id="GO:0030177">
    <property type="term" value="P:positive regulation of Wnt signaling pathway"/>
    <property type="evidence" value="ECO:0000316"/>
    <property type="project" value="UniProtKB"/>
</dbReference>
<dbReference type="GO" id="GO:0048793">
    <property type="term" value="P:pronephros development"/>
    <property type="evidence" value="ECO:0000315"/>
    <property type="project" value="UniProtKB"/>
</dbReference>
<dbReference type="GO" id="GO:0061355">
    <property type="term" value="P:Wnt protein secretion"/>
    <property type="evidence" value="ECO:0000318"/>
    <property type="project" value="GO_Central"/>
</dbReference>
<dbReference type="GO" id="GO:0016055">
    <property type="term" value="P:Wnt signaling pathway"/>
    <property type="evidence" value="ECO:0007669"/>
    <property type="project" value="UniProtKB-KW"/>
</dbReference>
<dbReference type="InterPro" id="IPR047843">
    <property type="entry name" value="WLS-like_TM"/>
</dbReference>
<dbReference type="InterPro" id="IPR053936">
    <property type="entry name" value="WLS_GOLD"/>
</dbReference>
<dbReference type="InterPro" id="IPR009551">
    <property type="entry name" value="Wntless"/>
</dbReference>
<dbReference type="PANTHER" id="PTHR13449">
    <property type="entry name" value="INTEGRAL MEMBRANE PROTEIN GPR177"/>
    <property type="match status" value="1"/>
</dbReference>
<dbReference type="PANTHER" id="PTHR13449:SF2">
    <property type="entry name" value="PROTEIN WNTLESS HOMOLOG"/>
    <property type="match status" value="1"/>
</dbReference>
<dbReference type="Pfam" id="PF06664">
    <property type="entry name" value="WLS-like_TM"/>
    <property type="match status" value="1"/>
</dbReference>
<dbReference type="Pfam" id="PF21883">
    <property type="entry name" value="WLS_GOLD"/>
    <property type="match status" value="1"/>
</dbReference>
<gene>
    <name type="primary">wls-b</name>
    <name type="synonym">gpr177-b</name>
</gene>
<name>WLSB_XENLA</name>
<organism>
    <name type="scientific">Xenopus laevis</name>
    <name type="common">African clawed frog</name>
    <dbReference type="NCBI Taxonomy" id="8355"/>
    <lineage>
        <taxon>Eukaryota</taxon>
        <taxon>Metazoa</taxon>
        <taxon>Chordata</taxon>
        <taxon>Craniata</taxon>
        <taxon>Vertebrata</taxon>
        <taxon>Euteleostomi</taxon>
        <taxon>Amphibia</taxon>
        <taxon>Batrachia</taxon>
        <taxon>Anura</taxon>
        <taxon>Pipoidea</taxon>
        <taxon>Pipidae</taxon>
        <taxon>Xenopodinae</taxon>
        <taxon>Xenopus</taxon>
        <taxon>Xenopus</taxon>
    </lineage>
</organism>
<comment type="function">
    <text evidence="4">Required for a subset of Wnt-dependent developmental processes, in particular, eye and pronephros development. Regulates the secretion of wnt4, which is required for eye development.</text>
</comment>
<comment type="subcellular location">
    <subcellularLocation>
        <location evidence="1">Golgi apparatus membrane</location>
        <topology evidence="1">Multi-pass membrane protein</topology>
    </subcellularLocation>
    <subcellularLocation>
        <location evidence="1">Cytoplasmic vesicle membrane</location>
        <topology evidence="1">Multi-pass membrane protein</topology>
    </subcellularLocation>
</comment>
<comment type="tissue specificity">
    <text evidence="4">Enriched in the animal hemisphere of the early cleavage embryo, where expression persists until the late gastrula stage. At the neurula stage, strongly expressed at the border of the neural plate and dorsal midline. After the neurula stage, expressed in various organs, including the eye, liver, heart, pronephros, otic vesicle, and dorsal neural tube. Expression in the developing eye is dynamic; expressed in the eye field from stages 23 to 27, and from stage 30 expression is confined to distinct regions including the central part and border of the eye.</text>
</comment>
<comment type="developmental stage">
    <text evidence="4">Expressed both maternally and zygotically, with zygotic expression continuing to the tadpole stage (stage 42).</text>
</comment>
<comment type="similarity">
    <text evidence="5">Belongs to the wntless family.</text>
</comment>
<feature type="chain" id="PRO_0000271783" description="Protein wntless homolog B">
    <location>
        <begin position="1"/>
        <end position="541"/>
    </location>
</feature>
<feature type="topological domain" description="Cytoplasmic" evidence="2">
    <location>
        <begin position="1"/>
        <end position="15"/>
    </location>
</feature>
<feature type="transmembrane region" description="Helical; Name=1" evidence="3">
    <location>
        <begin position="16"/>
        <end position="36"/>
    </location>
</feature>
<feature type="topological domain" description="Lumenal" evidence="2">
    <location>
        <begin position="37"/>
        <end position="232"/>
    </location>
</feature>
<feature type="transmembrane region" description="Helical; Name=2" evidence="3">
    <location>
        <begin position="233"/>
        <end position="253"/>
    </location>
</feature>
<feature type="topological domain" description="Cytoplasmic" evidence="2">
    <location>
        <begin position="254"/>
        <end position="268"/>
    </location>
</feature>
<feature type="transmembrane region" description="Helical; Name=3" evidence="3">
    <location>
        <begin position="269"/>
        <end position="289"/>
    </location>
</feature>
<feature type="topological domain" description="Lumenal" evidence="2">
    <location>
        <begin position="290"/>
        <end position="303"/>
    </location>
</feature>
<feature type="transmembrane region" description="Helical; Name=4" evidence="3">
    <location>
        <begin position="304"/>
        <end position="324"/>
    </location>
</feature>
<feature type="topological domain" description="Cytoplasmic" evidence="2">
    <location>
        <begin position="325"/>
        <end position="331"/>
    </location>
</feature>
<feature type="transmembrane region" description="Helical; Name=5" evidence="3">
    <location>
        <begin position="332"/>
        <end position="352"/>
    </location>
</feature>
<feature type="topological domain" description="Lumenal" evidence="2">
    <location>
        <begin position="353"/>
        <end position="379"/>
    </location>
</feature>
<feature type="transmembrane region" description="Helical; Name=6" evidence="3">
    <location>
        <begin position="380"/>
        <end position="400"/>
    </location>
</feature>
<feature type="topological domain" description="Cytoplasmic" evidence="2">
    <location>
        <begin position="401"/>
        <end position="431"/>
    </location>
</feature>
<feature type="transmembrane region" description="Helical; Name=7" evidence="3">
    <location>
        <begin position="432"/>
        <end position="452"/>
    </location>
</feature>
<feature type="topological domain" description="Lumenal" evidence="2">
    <location>
        <begin position="453"/>
        <end position="471"/>
    </location>
</feature>
<feature type="transmembrane region" description="Helical; Name=8" evidence="3">
    <location>
        <begin position="472"/>
        <end position="492"/>
    </location>
</feature>
<feature type="topological domain" description="Cytoplasmic" evidence="2">
    <location>
        <begin position="493"/>
        <end position="541"/>
    </location>
</feature>
<keyword id="KW-0968">Cytoplasmic vesicle</keyword>
<keyword id="KW-0217">Developmental protein</keyword>
<keyword id="KW-0333">Golgi apparatus</keyword>
<keyword id="KW-0472">Membrane</keyword>
<keyword id="KW-1185">Reference proteome</keyword>
<keyword id="KW-0812">Transmembrane</keyword>
<keyword id="KW-1133">Transmembrane helix</keyword>
<keyword id="KW-0879">Wnt signaling pathway</keyword>
<reference key="1">
    <citation type="submission" date="2005-01" db="EMBL/GenBank/DDBJ databases">
        <authorList>
            <consortium name="NIH - Xenopus Gene Collection (XGC) project"/>
        </authorList>
    </citation>
    <scope>NUCLEOTIDE SEQUENCE [LARGE SCALE MRNA]</scope>
    <source>
        <tissue>Egg</tissue>
        <tissue>Spleen</tissue>
    </source>
</reference>
<reference key="2">
    <citation type="journal article" date="2009" name="Mol. Cell. Biol.">
        <title>Xenopus Wntless and the retromer complex cooperate to regulate XWnt4 secretion.</title>
        <authorList>
            <person name="Kim H."/>
            <person name="Cheong S.M."/>
            <person name="Ryu J."/>
            <person name="Jung H.J."/>
            <person name="Jho E.H."/>
            <person name="Han J.K."/>
        </authorList>
    </citation>
    <scope>FUNCTION</scope>
    <scope>TISSUE SPECIFICITY</scope>
    <scope>DEVELOPMENTAL STAGE</scope>
</reference>
<evidence type="ECO:0000250" key="1"/>
<evidence type="ECO:0000250" key="2">
    <source>
        <dbReference type="UniProtKB" id="Q5T9L3"/>
    </source>
</evidence>
<evidence type="ECO:0000255" key="3"/>
<evidence type="ECO:0000269" key="4">
    <source>
    </source>
</evidence>
<evidence type="ECO:0000305" key="5"/>
<sequence length="541" mass="62001">MAGAIIENMSTKKLCMVGVALLLLQVLAFLVGGLIAPKPTTYVNPVAMKCIDVRKSHRSSKWLMPWGTEPCKSIQSFDEAANRLIEANDIVFAAHIPNSQFEMSPWFQFMLVVLQLDIAFKLNNYIEDHSMVTLDVAVAYRDDLKEEWKELARSVEQRKLNCILPVDKTVANEGRHYDCDVIPLMELGSVSHKYYLFNIRLPVNERQKMNIGIGEIRDMHVVSIFQNGGFTMVWFAMKTFLTPCIIIIMIWYWRRITMMTRSPVLLEKVIFALGISMTFINIPVEWFSIGYDWTWMLLFGDIRQGIFYAMLLSFWIIFCGEHMMDQAERNRISIYWKQVGPIAFGSCCLFIFDMCERGVQLKNPFYSIWTTDVGAEIAMAFIIVAGICACLYFLFLCFMVYQVFRNISGKRSNLPAMSKARRLHYEGLIFRFKFLMIITLACAALTVVFFITTQITEGNWKLGDLSIELNSAFFTGIYGMWNLYVFALMFLYAPSHKHYGDGQSNDGAGMSSGEELQLTTTITHIDGPTELYRLAGKEAQE</sequence>
<protein>
    <recommendedName>
        <fullName>Protein wntless homolog B</fullName>
        <shortName>XWntless</shortName>
    </recommendedName>
    <alternativeName>
        <fullName>Integral membrane protein GPR177-B</fullName>
    </alternativeName>
</protein>
<accession>Q5FWK6</accession>